<reference key="1">
    <citation type="journal article" date="1993" name="Plant Mol. Biol.">
        <title>The gene and the RNA for the precursor to the plastid-located glycerol-3-phosphate acyltransferase of Arabidopsis thaliana.</title>
        <authorList>
            <person name="Nishida I."/>
            <person name="Tasaka Y."/>
            <person name="Shiraishi H."/>
            <person name="Murata N."/>
        </authorList>
    </citation>
    <scope>NUCLEOTIDE SEQUENCE [GENOMIC DNA / MRNA]</scope>
    <scope>FUNCTION</scope>
    <scope>CATALYTIC ACTIVITY</scope>
</reference>
<reference key="2">
    <citation type="journal article" date="2000" name="Nature">
        <title>Sequence and analysis of chromosome 1 of the plant Arabidopsis thaliana.</title>
        <authorList>
            <person name="Theologis A."/>
            <person name="Ecker J.R."/>
            <person name="Palm C.J."/>
            <person name="Federspiel N.A."/>
            <person name="Kaul S."/>
            <person name="White O."/>
            <person name="Alonso J."/>
            <person name="Altafi H."/>
            <person name="Araujo R."/>
            <person name="Bowman C.L."/>
            <person name="Brooks S.Y."/>
            <person name="Buehler E."/>
            <person name="Chan A."/>
            <person name="Chao Q."/>
            <person name="Chen H."/>
            <person name="Cheuk R.F."/>
            <person name="Chin C.W."/>
            <person name="Chung M.K."/>
            <person name="Conn L."/>
            <person name="Conway A.B."/>
            <person name="Conway A.R."/>
            <person name="Creasy T.H."/>
            <person name="Dewar K."/>
            <person name="Dunn P."/>
            <person name="Etgu P."/>
            <person name="Feldblyum T.V."/>
            <person name="Feng J.-D."/>
            <person name="Fong B."/>
            <person name="Fujii C.Y."/>
            <person name="Gill J.E."/>
            <person name="Goldsmith A.D."/>
            <person name="Haas B."/>
            <person name="Hansen N.F."/>
            <person name="Hughes B."/>
            <person name="Huizar L."/>
            <person name="Hunter J.L."/>
            <person name="Jenkins J."/>
            <person name="Johnson-Hopson C."/>
            <person name="Khan S."/>
            <person name="Khaykin E."/>
            <person name="Kim C.J."/>
            <person name="Koo H.L."/>
            <person name="Kremenetskaia I."/>
            <person name="Kurtz D.B."/>
            <person name="Kwan A."/>
            <person name="Lam B."/>
            <person name="Langin-Hooper S."/>
            <person name="Lee A."/>
            <person name="Lee J.M."/>
            <person name="Lenz C.A."/>
            <person name="Li J.H."/>
            <person name="Li Y.-P."/>
            <person name="Lin X."/>
            <person name="Liu S.X."/>
            <person name="Liu Z.A."/>
            <person name="Luros J.S."/>
            <person name="Maiti R."/>
            <person name="Marziali A."/>
            <person name="Militscher J."/>
            <person name="Miranda M."/>
            <person name="Nguyen M."/>
            <person name="Nierman W.C."/>
            <person name="Osborne B.I."/>
            <person name="Pai G."/>
            <person name="Peterson J."/>
            <person name="Pham P.K."/>
            <person name="Rizzo M."/>
            <person name="Rooney T."/>
            <person name="Rowley D."/>
            <person name="Sakano H."/>
            <person name="Salzberg S.L."/>
            <person name="Schwartz J.R."/>
            <person name="Shinn P."/>
            <person name="Southwick A.M."/>
            <person name="Sun H."/>
            <person name="Tallon L.J."/>
            <person name="Tambunga G."/>
            <person name="Toriumi M.J."/>
            <person name="Town C.D."/>
            <person name="Utterback T."/>
            <person name="Van Aken S."/>
            <person name="Vaysberg M."/>
            <person name="Vysotskaia V.S."/>
            <person name="Walker M."/>
            <person name="Wu D."/>
            <person name="Yu G."/>
            <person name="Fraser C.M."/>
            <person name="Venter J.C."/>
            <person name="Davis R.W."/>
        </authorList>
    </citation>
    <scope>NUCLEOTIDE SEQUENCE [LARGE SCALE GENOMIC DNA]</scope>
    <source>
        <strain>cv. Columbia</strain>
    </source>
</reference>
<reference key="3">
    <citation type="journal article" date="2017" name="Plant J.">
        <title>Araport11: a complete reannotation of the Arabidopsis thaliana reference genome.</title>
        <authorList>
            <person name="Cheng C.Y."/>
            <person name="Krishnakumar V."/>
            <person name="Chan A.P."/>
            <person name="Thibaud-Nissen F."/>
            <person name="Schobel S."/>
            <person name="Town C.D."/>
        </authorList>
    </citation>
    <scope>GENOME REANNOTATION</scope>
    <source>
        <strain>cv. Columbia</strain>
    </source>
</reference>
<reference key="4">
    <citation type="journal article" date="2003" name="Science">
        <title>Empirical analysis of transcriptional activity in the Arabidopsis genome.</title>
        <authorList>
            <person name="Yamada K."/>
            <person name="Lim J."/>
            <person name="Dale J.M."/>
            <person name="Chen H."/>
            <person name="Shinn P."/>
            <person name="Palm C.J."/>
            <person name="Southwick A.M."/>
            <person name="Wu H.C."/>
            <person name="Kim C.J."/>
            <person name="Nguyen M."/>
            <person name="Pham P.K."/>
            <person name="Cheuk R.F."/>
            <person name="Karlin-Newmann G."/>
            <person name="Liu S.X."/>
            <person name="Lam B."/>
            <person name="Sakano H."/>
            <person name="Wu T."/>
            <person name="Yu G."/>
            <person name="Miranda M."/>
            <person name="Quach H.L."/>
            <person name="Tripp M."/>
            <person name="Chang C.H."/>
            <person name="Lee J.M."/>
            <person name="Toriumi M.J."/>
            <person name="Chan M.M."/>
            <person name="Tang C.C."/>
            <person name="Onodera C.S."/>
            <person name="Deng J.M."/>
            <person name="Akiyama K."/>
            <person name="Ansari Y."/>
            <person name="Arakawa T."/>
            <person name="Banh J."/>
            <person name="Banno F."/>
            <person name="Bowser L."/>
            <person name="Brooks S.Y."/>
            <person name="Carninci P."/>
            <person name="Chao Q."/>
            <person name="Choy N."/>
            <person name="Enju A."/>
            <person name="Goldsmith A.D."/>
            <person name="Gurjal M."/>
            <person name="Hansen N.F."/>
            <person name="Hayashizaki Y."/>
            <person name="Johnson-Hopson C."/>
            <person name="Hsuan V.W."/>
            <person name="Iida K."/>
            <person name="Karnes M."/>
            <person name="Khan S."/>
            <person name="Koesema E."/>
            <person name="Ishida J."/>
            <person name="Jiang P.X."/>
            <person name="Jones T."/>
            <person name="Kawai J."/>
            <person name="Kamiya A."/>
            <person name="Meyers C."/>
            <person name="Nakajima M."/>
            <person name="Narusaka M."/>
            <person name="Seki M."/>
            <person name="Sakurai T."/>
            <person name="Satou M."/>
            <person name="Tamse R."/>
            <person name="Vaysberg M."/>
            <person name="Wallender E.K."/>
            <person name="Wong C."/>
            <person name="Yamamura Y."/>
            <person name="Yuan S."/>
            <person name="Shinozaki K."/>
            <person name="Davis R.W."/>
            <person name="Theologis A."/>
            <person name="Ecker J.R."/>
        </authorList>
    </citation>
    <scope>NUCLEOTIDE SEQUENCE [LARGE SCALE MRNA]</scope>
    <source>
        <strain>cv. Columbia</strain>
    </source>
</reference>
<feature type="transit peptide" description="Chloroplast" evidence="1">
    <location>
        <begin position="1"/>
        <end position="90"/>
    </location>
</feature>
<feature type="chain" id="PRO_0000024694" description="Glycerol-3-phosphate acyltransferase, chloroplastic">
    <location>
        <begin position="91"/>
        <end position="459"/>
    </location>
</feature>
<feature type="short sequence motif" description="HXXXXD motif">
    <location>
        <begin position="229"/>
        <end position="234"/>
    </location>
</feature>
<feature type="sequence conflict" description="In Ref. 1; BAA00576/BAA00575." evidence="3" ref="1">
    <original>S</original>
    <variation>N</variation>
    <location>
        <position position="93"/>
    </location>
</feature>
<feature type="sequence conflict" description="In Ref. 1; BAA00576/BAA00575." evidence="3" ref="1">
    <original>D</original>
    <variation>V</variation>
    <location>
        <position position="287"/>
    </location>
</feature>
<dbReference type="EC" id="2.3.1.15" evidence="4"/>
<dbReference type="EMBL" id="D00673">
    <property type="protein sequence ID" value="BAA00576.1"/>
    <property type="molecule type" value="mRNA"/>
</dbReference>
<dbReference type="EMBL" id="D00672">
    <property type="protein sequence ID" value="BAA00575.1"/>
    <property type="molecule type" value="Genomic_DNA"/>
</dbReference>
<dbReference type="EMBL" id="AC084165">
    <property type="protein sequence ID" value="AAG23437.1"/>
    <property type="molecule type" value="Genomic_DNA"/>
</dbReference>
<dbReference type="EMBL" id="CP002684">
    <property type="protein sequence ID" value="AEE31447.1"/>
    <property type="molecule type" value="Genomic_DNA"/>
</dbReference>
<dbReference type="EMBL" id="CP002684">
    <property type="protein sequence ID" value="AEE31448.1"/>
    <property type="molecule type" value="Genomic_DNA"/>
</dbReference>
<dbReference type="EMBL" id="AY093169">
    <property type="protein sequence ID" value="AAM13168.1"/>
    <property type="molecule type" value="mRNA"/>
</dbReference>
<dbReference type="EMBL" id="BT008758">
    <property type="protein sequence ID" value="AAP49520.1"/>
    <property type="molecule type" value="mRNA"/>
</dbReference>
<dbReference type="PIR" id="E86446">
    <property type="entry name" value="E86446"/>
</dbReference>
<dbReference type="PIR" id="S31083">
    <property type="entry name" value="S31083"/>
</dbReference>
<dbReference type="RefSeq" id="NP_174499.1">
    <property type="nucleotide sequence ID" value="NM_102953.4"/>
</dbReference>
<dbReference type="RefSeq" id="NP_849738.1">
    <property type="nucleotide sequence ID" value="NM_179407.3"/>
</dbReference>
<dbReference type="SMR" id="Q43307"/>
<dbReference type="BioGRID" id="25346">
    <property type="interactions" value="1"/>
</dbReference>
<dbReference type="FunCoup" id="Q43307">
    <property type="interactions" value="1106"/>
</dbReference>
<dbReference type="STRING" id="3702.Q43307"/>
<dbReference type="PaxDb" id="3702-AT1G32200.1"/>
<dbReference type="ProteomicsDB" id="235042"/>
<dbReference type="EnsemblPlants" id="AT1G32200.1">
    <property type="protein sequence ID" value="AT1G32200.1"/>
    <property type="gene ID" value="AT1G32200"/>
</dbReference>
<dbReference type="EnsemblPlants" id="AT1G32200.2">
    <property type="protein sequence ID" value="AT1G32200.2"/>
    <property type="gene ID" value="AT1G32200"/>
</dbReference>
<dbReference type="GeneID" id="840112"/>
<dbReference type="Gramene" id="AT1G32200.1">
    <property type="protein sequence ID" value="AT1G32200.1"/>
    <property type="gene ID" value="AT1G32200"/>
</dbReference>
<dbReference type="Gramene" id="AT1G32200.2">
    <property type="protein sequence ID" value="AT1G32200.2"/>
    <property type="gene ID" value="AT1G32200"/>
</dbReference>
<dbReference type="KEGG" id="ath:AT1G32200"/>
<dbReference type="Araport" id="AT1G32200"/>
<dbReference type="TAIR" id="AT1G32200">
    <property type="gene designation" value="ATS1"/>
</dbReference>
<dbReference type="eggNOG" id="ENOG502QRHE">
    <property type="taxonomic scope" value="Eukaryota"/>
</dbReference>
<dbReference type="HOGENOM" id="CLU_043091_1_0_1"/>
<dbReference type="InParanoid" id="Q43307"/>
<dbReference type="OMA" id="IAENMIY"/>
<dbReference type="PhylomeDB" id="Q43307"/>
<dbReference type="BioCyc" id="MetaCyc:AT1G32200-MONOMER"/>
<dbReference type="UniPathway" id="UPA00557">
    <property type="reaction ID" value="UER00612"/>
</dbReference>
<dbReference type="PRO" id="PR:Q43307"/>
<dbReference type="Proteomes" id="UP000006548">
    <property type="component" value="Chromosome 1"/>
</dbReference>
<dbReference type="ExpressionAtlas" id="Q43307">
    <property type="expression patterns" value="baseline and differential"/>
</dbReference>
<dbReference type="GO" id="GO:0009507">
    <property type="term" value="C:chloroplast"/>
    <property type="evidence" value="ECO:0007005"/>
    <property type="project" value="TAIR"/>
</dbReference>
<dbReference type="GO" id="GO:0009570">
    <property type="term" value="C:chloroplast stroma"/>
    <property type="evidence" value="ECO:0000314"/>
    <property type="project" value="TAIR"/>
</dbReference>
<dbReference type="GO" id="GO:0009536">
    <property type="term" value="C:plastid"/>
    <property type="evidence" value="ECO:0000303"/>
    <property type="project" value="TAIR"/>
</dbReference>
<dbReference type="GO" id="GO:0004366">
    <property type="term" value="F:glycerol-3-phosphate O-acyltransferase activity"/>
    <property type="evidence" value="ECO:0000314"/>
    <property type="project" value="TAIR"/>
</dbReference>
<dbReference type="GO" id="GO:0016024">
    <property type="term" value="P:CDP-diacylglycerol biosynthetic process"/>
    <property type="evidence" value="ECO:0007669"/>
    <property type="project" value="UniProtKB-UniPathway"/>
</dbReference>
<dbReference type="GO" id="GO:0006655">
    <property type="term" value="P:phosphatidylglycerol biosynthetic process"/>
    <property type="evidence" value="ECO:0000315"/>
    <property type="project" value="TAIR"/>
</dbReference>
<dbReference type="CDD" id="cd07985">
    <property type="entry name" value="LPLAT_GPAT"/>
    <property type="match status" value="1"/>
</dbReference>
<dbReference type="FunFam" id="3.40.1130.10:FF:000002">
    <property type="entry name" value="Glycerol-3-phosphate acyltransferase, chloroplastic"/>
    <property type="match status" value="1"/>
</dbReference>
<dbReference type="Gene3D" id="3.40.1130.10">
    <property type="entry name" value="Glycerol-3-phosphate (1)-acyltransferase"/>
    <property type="match status" value="1"/>
</dbReference>
<dbReference type="Gene3D" id="1.10.1200.50">
    <property type="entry name" value="Glycerol-3-phosphate acyltransferase, alpha helical bundle, N-terminal"/>
    <property type="match status" value="1"/>
</dbReference>
<dbReference type="InterPro" id="IPR016222">
    <property type="entry name" value="G3P_O-acylTrfase_chlp"/>
</dbReference>
<dbReference type="InterPro" id="IPR023083">
    <property type="entry name" value="G3P_O-acylTrfase_N"/>
</dbReference>
<dbReference type="InterPro" id="IPR038114">
    <property type="entry name" value="GPAT_N_sf"/>
</dbReference>
<dbReference type="InterPro" id="IPR002123">
    <property type="entry name" value="Plipid/glycerol_acylTrfase"/>
</dbReference>
<dbReference type="PANTHER" id="PTHR35695">
    <property type="entry name" value="GLYCEROL-3-PHOSPHATE ACYLTRANSFERASE, CHLOROPLASTIC"/>
    <property type="match status" value="1"/>
</dbReference>
<dbReference type="PANTHER" id="PTHR35695:SF1">
    <property type="entry name" value="GLYCEROL-3-PHOSPHATE ACYLTRANSFERASE, CHLOROPLASTIC"/>
    <property type="match status" value="1"/>
</dbReference>
<dbReference type="Pfam" id="PF01553">
    <property type="entry name" value="Acyltransferase"/>
    <property type="match status" value="1"/>
</dbReference>
<dbReference type="Pfam" id="PF14829">
    <property type="entry name" value="GPAT_N"/>
    <property type="match status" value="1"/>
</dbReference>
<dbReference type="PIRSF" id="PIRSF000431">
    <property type="entry name" value="Glycerol-3-P_O-acyltransfrase"/>
    <property type="match status" value="1"/>
</dbReference>
<dbReference type="SMART" id="SM00563">
    <property type="entry name" value="PlsC"/>
    <property type="match status" value="1"/>
</dbReference>
<dbReference type="SUPFAM" id="SSF69593">
    <property type="entry name" value="Glycerol-3-phosphate (1)-acyltransferase"/>
    <property type="match status" value="1"/>
</dbReference>
<keyword id="KW-0012">Acyltransferase</keyword>
<keyword id="KW-0150">Chloroplast</keyword>
<keyword id="KW-0444">Lipid biosynthesis</keyword>
<keyword id="KW-0443">Lipid metabolism</keyword>
<keyword id="KW-0594">Phospholipid biosynthesis</keyword>
<keyword id="KW-1208">Phospholipid metabolism</keyword>
<keyword id="KW-0934">Plastid</keyword>
<keyword id="KW-1185">Reference proteome</keyword>
<keyword id="KW-0808">Transferase</keyword>
<keyword id="KW-0809">Transit peptide</keyword>
<sequence length="459" mass="50421">MTLTFSSSAATVAVAAATVTSSARVPVYPLASSTLRGLVSFRLTAKKLFLPPLRSRGGVSVRAMSELVQDKESSVAASIAFNEAAGETPSELSHSRTFLDARSEQDLLSGIKKEAEAGRLPANVAAGMEELYWNYKNAVLSSGASRADETVVSNMSVAFDRMLLGVEDPYTFNPYHKAVREPFDYYMFVHTYIRPLIDFKNSYVGNASIFSELEDKIRQGHNIVLISNHQSEADPAVISLLLEAQSPFIGENIKCVAGDRVITDPLCKPFSMGRNLICVYSKKHMNDDPELVDMKRKANTRSLKEMATMLRSGGQLIWIAPSGGRDRPNPSTGEWFPAPFDASSVDNMRRLVEHSGAPGHIYPMSLLCYDIMPPPPQVEKEIGEKRLVGFHGTGLSIAPEINFSDVTADCESPNEAKEAYSQALYKSVNEQYEILNSAIKHRRGVEASTSRVSLSQPWN</sequence>
<evidence type="ECO:0000250" key="1"/>
<evidence type="ECO:0000303" key="2">
    <source>
    </source>
</evidence>
<evidence type="ECO:0000305" key="3"/>
<evidence type="ECO:0000305" key="4">
    <source>
    </source>
</evidence>
<protein>
    <recommendedName>
        <fullName>Glycerol-3-phosphate acyltransferase, chloroplastic</fullName>
        <shortName evidence="2">GPAT</shortName>
        <ecNumber evidence="4">2.3.1.15</ecNumber>
    </recommendedName>
</protein>
<gene>
    <name type="primary">ATS1</name>
    <name type="ordered locus">At1g32200</name>
    <name type="ORF">F3C3.13</name>
</gene>
<organism>
    <name type="scientific">Arabidopsis thaliana</name>
    <name type="common">Mouse-ear cress</name>
    <dbReference type="NCBI Taxonomy" id="3702"/>
    <lineage>
        <taxon>Eukaryota</taxon>
        <taxon>Viridiplantae</taxon>
        <taxon>Streptophyta</taxon>
        <taxon>Embryophyta</taxon>
        <taxon>Tracheophyta</taxon>
        <taxon>Spermatophyta</taxon>
        <taxon>Magnoliopsida</taxon>
        <taxon>eudicotyledons</taxon>
        <taxon>Gunneridae</taxon>
        <taxon>Pentapetalae</taxon>
        <taxon>rosids</taxon>
        <taxon>malvids</taxon>
        <taxon>Brassicales</taxon>
        <taxon>Brassicaceae</taxon>
        <taxon>Camelineae</taxon>
        <taxon>Arabidopsis</taxon>
    </lineage>
</organism>
<proteinExistence type="evidence at protein level"/>
<comment type="function">
    <text evidence="4">Esterifies acyl-group from acyl-ACP to the sn-1 position of glycerol-3-phosphate (Probable). The enzyme from chilling-resistant plants discriminates against non-fluid palmitic acid and selects oleic acid whereas the enzyme from sensitive plants accepts both fatty acids. This is an oleate-selective acyltransferase.</text>
</comment>
<comment type="catalytic activity">
    <reaction evidence="4">
        <text>sn-glycerol 3-phosphate + an acyl-CoA = a 1-acyl-sn-glycero-3-phosphate + CoA</text>
        <dbReference type="Rhea" id="RHEA:15325"/>
        <dbReference type="ChEBI" id="CHEBI:57287"/>
        <dbReference type="ChEBI" id="CHEBI:57597"/>
        <dbReference type="ChEBI" id="CHEBI:57970"/>
        <dbReference type="ChEBI" id="CHEBI:58342"/>
        <dbReference type="EC" id="2.3.1.15"/>
    </reaction>
    <physiologicalReaction direction="left-to-right" evidence="4">
        <dbReference type="Rhea" id="RHEA:15326"/>
    </physiologicalReaction>
</comment>
<comment type="pathway">
    <text>Phospholipid metabolism; CDP-diacylglycerol biosynthesis; CDP-diacylglycerol from sn-glycerol 3-phosphate: step 1/3.</text>
</comment>
<comment type="subcellular location">
    <subcellularLocation>
        <location>Plastid</location>
        <location>Chloroplast stroma</location>
    </subcellularLocation>
</comment>
<comment type="domain">
    <text evidence="1">The HXXXXD motif is essential for acyltransferase activity and may constitute the binding site for the phosphate moiety of the glycerol-3-phosphate.</text>
</comment>
<comment type="similarity">
    <text evidence="3">Belongs to the GPAT/DAPAT family.</text>
</comment>
<accession>Q43307</accession>
<accession>Q9FVR5</accession>
<name>PLSB_ARATH</name>